<evidence type="ECO:0000250" key="1">
    <source>
        <dbReference type="UniProtKB" id="A0A345BJN4"/>
    </source>
</evidence>
<evidence type="ECO:0000255" key="2">
    <source>
        <dbReference type="PIRSR" id="PIRSR001369-1"/>
    </source>
</evidence>
<evidence type="ECO:0000256" key="3">
    <source>
        <dbReference type="SAM" id="MobiDB-lite"/>
    </source>
</evidence>
<evidence type="ECO:0000269" key="4">
    <source>
    </source>
</evidence>
<evidence type="ECO:0000269" key="5">
    <source>
    </source>
</evidence>
<evidence type="ECO:0000269" key="6">
    <source>
    </source>
</evidence>
<evidence type="ECO:0000269" key="7">
    <source>
    </source>
</evidence>
<evidence type="ECO:0000303" key="8">
    <source>
    </source>
</evidence>
<evidence type="ECO:0000305" key="9"/>
<evidence type="ECO:0000305" key="10">
    <source>
    </source>
</evidence>
<accession>A0A3G1DJJ8</accession>
<organism>
    <name type="scientific">Phoma sp. (strain ATCC 20986 / MF5453)</name>
    <dbReference type="NCBI Taxonomy" id="1828523"/>
    <lineage>
        <taxon>Eukaryota</taxon>
        <taxon>Fungi</taxon>
        <taxon>Dikarya</taxon>
        <taxon>Ascomycota</taxon>
        <taxon>Pezizomycotina</taxon>
        <taxon>Dothideomycetes</taxon>
        <taxon>Pleosporomycetidae</taxon>
        <taxon>Pleosporales</taxon>
        <taxon>Pleosporineae</taxon>
        <taxon>Didymellaceae</taxon>
        <taxon>Phoma</taxon>
    </lineage>
</organism>
<dbReference type="EC" id="2.3.3.-" evidence="10"/>
<dbReference type="EMBL" id="KU946987">
    <property type="protein sequence ID" value="AMY15071.1"/>
    <property type="molecule type" value="Genomic_DNA"/>
</dbReference>
<dbReference type="SMR" id="A0A3G1DJJ8"/>
<dbReference type="GO" id="GO:0005759">
    <property type="term" value="C:mitochondrial matrix"/>
    <property type="evidence" value="ECO:0007669"/>
    <property type="project" value="TreeGrafter"/>
</dbReference>
<dbReference type="GO" id="GO:0004108">
    <property type="term" value="F:citrate (Si)-synthase activity"/>
    <property type="evidence" value="ECO:0007669"/>
    <property type="project" value="TreeGrafter"/>
</dbReference>
<dbReference type="GO" id="GO:0005975">
    <property type="term" value="P:carbohydrate metabolic process"/>
    <property type="evidence" value="ECO:0007669"/>
    <property type="project" value="TreeGrafter"/>
</dbReference>
<dbReference type="GO" id="GO:0006099">
    <property type="term" value="P:tricarboxylic acid cycle"/>
    <property type="evidence" value="ECO:0007669"/>
    <property type="project" value="InterPro"/>
</dbReference>
<dbReference type="Gene3D" id="1.10.580.10">
    <property type="entry name" value="Citrate Synthase, domain 1"/>
    <property type="match status" value="1"/>
</dbReference>
<dbReference type="Gene3D" id="1.10.230.10">
    <property type="entry name" value="Cytochrome P450-Terp, domain 2"/>
    <property type="match status" value="1"/>
</dbReference>
<dbReference type="InterPro" id="IPR016142">
    <property type="entry name" value="Citrate_synth-like_lrg_a-sub"/>
</dbReference>
<dbReference type="InterPro" id="IPR016143">
    <property type="entry name" value="Citrate_synth-like_sm_a-sub"/>
</dbReference>
<dbReference type="InterPro" id="IPR002020">
    <property type="entry name" value="Citrate_synthase"/>
</dbReference>
<dbReference type="InterPro" id="IPR019810">
    <property type="entry name" value="Citrate_synthase_AS"/>
</dbReference>
<dbReference type="InterPro" id="IPR024176">
    <property type="entry name" value="Citrate_synthase_bac-typ"/>
</dbReference>
<dbReference type="InterPro" id="IPR036969">
    <property type="entry name" value="Citrate_synthase_sf"/>
</dbReference>
<dbReference type="PANTHER" id="PTHR11739">
    <property type="entry name" value="CITRATE SYNTHASE"/>
    <property type="match status" value="1"/>
</dbReference>
<dbReference type="PANTHER" id="PTHR11739:SF4">
    <property type="entry name" value="CITRATE SYNTHASE, PEROXISOMAL"/>
    <property type="match status" value="1"/>
</dbReference>
<dbReference type="Pfam" id="PF00285">
    <property type="entry name" value="Citrate_synt"/>
    <property type="match status" value="1"/>
</dbReference>
<dbReference type="PIRSF" id="PIRSF001369">
    <property type="entry name" value="Citrate_synth"/>
    <property type="match status" value="1"/>
</dbReference>
<dbReference type="PRINTS" id="PR00143">
    <property type="entry name" value="CITRTSNTHASE"/>
</dbReference>
<dbReference type="SUPFAM" id="SSF48256">
    <property type="entry name" value="Citrate synthase"/>
    <property type="match status" value="1"/>
</dbReference>
<dbReference type="PROSITE" id="PS00480">
    <property type="entry name" value="CITRATE_SYNTHASE"/>
    <property type="match status" value="1"/>
</dbReference>
<comment type="function">
    <text evidence="1 4 5 6 7 10">Citrate synthase-like protein; part of the gene cluster that mediates the biosynthesis of squalestatin S1 (SQS1, also known as zaragozic acid A), a heavily oxidized fungal polyketide that offers potent cholesterol lowering activity by targeting squalene synthase (SS) (PubMed:27056201). SQS1 is composed of a 2,8-dioxobicyclic[3.2.1]octane-3,4,5-tricarboxyclic acid core that is connected to two lipophilic polyketide arms (PubMed:27056201). These initial steps feature the priming of an unusual benzoic acid starter unit onto the highly reducing polyketide synthase pks2, followed by oxaloacetate extension and product release to generate a tricarboxylic acid containing product (By similarity). The phenylalanine ammonia lyase (PAL) M7 and the acyl-CoA ligase M9 are involved in transforming phenylalanine into benzoyl-CoA (By similarity). The citrate synthase-like protein R3 is involved in connecting the C-alpha-carbons of the hexaketide chain and oxaloacetate to afford the tricarboxylic acid unit (By similarity). The potential hydrolytic enzymes, M8 and M10, are in close proximity to pks2 and may participate in product release (By similarity). On the other side, the tetraketide arm is synthesized by a the squalestatin tetraketide synthase pks1 and enzymatically esterified to the core in the last biosynthetic step, by the acetyltransferase M4 (PubMed:11251290, PubMed:15489970, PubMed:28106181). The biosynthesis of the tetraketide must involve 3 rounds of chain extension (PubMed:11251290, PubMed:15489970, PubMed:28106181). After the first and second rounds methyl-transfer occurs, and in all rounds of extension the ketoreductase and dehydratase are active (PubMed:11251290, PubMed:15489970, PubMed:28106181). The enoyl reductase and C-MeT of pks1 are not active in the final round of extension (PubMed:11251290, PubMed:15489970, PubMed:28106181). The acetyltransferase M4 appears to have a broad substrate selectivity for its acyl CoA substrate, allowing the in vitro synthesis of novel squalestatins (Probable). The biosynthesis of SQS1 requires several oxidative steps likely performed by oxidoreductases M1, R1 and R2 (Probable). Finally, in support of the identification of the cluster as being responsible for SQS1 production, the cluster contains a gene encoding a putative squalene synthase (SS) R6, suggesting a likely mechanism for self-resistance (Probable).</text>
</comment>
<comment type="pathway">
    <text evidence="10">Secondary metabolite biosynthesis.</text>
</comment>
<comment type="induction">
    <text evidence="6">Expression is induced on squalestatin S1-producing YMG medium.</text>
</comment>
<comment type="similarity">
    <text evidence="9">Belongs to the citrate synthase family.</text>
</comment>
<proteinExistence type="evidence at transcript level"/>
<reference key="1">
    <citation type="journal article" date="2016" name="Chem. Commun. (Camb.)">
        <title>Identification of genes encoding squalestatin S1 biosynthesis and in vitro production of new squalestatin analogues.</title>
        <authorList>
            <person name="Bonsch B."/>
            <person name="Belt V."/>
            <person name="Bartel C."/>
            <person name="Duensing N."/>
            <person name="Koziol M."/>
            <person name="Lazarus C.M."/>
            <person name="Bailey A.M."/>
            <person name="Simpson T.J."/>
            <person name="Cox R.J."/>
        </authorList>
    </citation>
    <scope>NUCLEOTIDE SEQUENCE [GENOMIC DNA]</scope>
    <scope>FUNCTION</scope>
    <scope>INDUCTION</scope>
</reference>
<reference key="2">
    <citation type="journal article" date="2001" name="Chem. Biol.">
        <title>Design and utility of oligonucleotide gene probes for fungal polyketide synthases.</title>
        <authorList>
            <person name="Nicholson T.P."/>
            <person name="Rudd B.A."/>
            <person name="Dawson M."/>
            <person name="Lazarus C.M."/>
            <person name="Simpson T.J."/>
            <person name="Cox R.J."/>
        </authorList>
    </citation>
    <scope>FUNCTION</scope>
</reference>
<reference key="3">
    <citation type="journal article" date="2004" name="Chem. Commun. (Camb.)">
        <title>Rapid cloning and expression of a fungal polyketide synthase gene involved in squalestatin biosynthesis.</title>
        <authorList>
            <person name="Cox R.J."/>
            <person name="Glod F."/>
            <person name="Hurley D."/>
            <person name="Lazarus C.M."/>
            <person name="Nicholson T.P."/>
            <person name="Rudd B.A."/>
            <person name="Simpson T.J."/>
            <person name="Wilkinson B."/>
            <person name="Zhang Y."/>
        </authorList>
    </citation>
    <scope>FUNCTION</scope>
</reference>
<reference key="4">
    <citation type="journal article" date="2017" name="Chem. Commun. (Camb.)">
        <title>In vitro kinetic study of the squalestatin tetraketide synthase dehydratase reveals the stereochemical course of a fungal highly reducing polyketide synthase.</title>
        <authorList>
            <person name="Liddle E."/>
            <person name="Scott A."/>
            <person name="Han L.C."/>
            <person name="Ivison D."/>
            <person name="Simpson T.J."/>
            <person name="Willis C.L."/>
            <person name="Cox R.J."/>
        </authorList>
    </citation>
    <scope>FUNCTION</scope>
</reference>
<name>MFR3_PHOSM</name>
<protein>
    <recommendedName>
        <fullName evidence="8">Citrate synthase-like protein</fullName>
        <ecNumber evidence="10">2.3.3.-</ecNumber>
    </recommendedName>
    <alternativeName>
        <fullName evidence="8">Squalestatin S1 biosynthesis cluster protein R3</fullName>
    </alternativeName>
</protein>
<keyword id="KW-0808">Transferase</keyword>
<feature type="chain" id="PRO_0000447841" description="Citrate synthase-like protein">
    <location>
        <begin position="1"/>
        <end position="465"/>
    </location>
</feature>
<feature type="region of interest" description="Disordered" evidence="3">
    <location>
        <begin position="13"/>
        <end position="40"/>
    </location>
</feature>
<feature type="compositionally biased region" description="Polar residues" evidence="3">
    <location>
        <begin position="21"/>
        <end position="31"/>
    </location>
</feature>
<feature type="active site" evidence="2">
    <location>
        <position position="357"/>
    </location>
</feature>
<feature type="active site" evidence="2">
    <location>
        <position position="413"/>
    </location>
</feature>
<sequence length="465" mass="52029">MAIVNGAVGKPQHISDMVDSTKMNGNQSQDTAGRADTPVSNGGQDYLHVFDSRTCNIHHIPVSDGFVRGSDLSTIAAPLKGSSGRMQKLAVLDPGFQHTACKESSITFIDGEKGELRYRGVRIEDLFHDHDFDSTLHLLVWGRLPTKEEKIKFERRMFEVASPPQEVCDVIRKLPKNMDFISMFLTGLSTYMGTDEEMTRSRHQAVMTYHKNLQTTDDAIIRCFSYVSATLATVYCHVKGVELHHPQEGLTLVENFLHMIGMEDPDKKISRTIDRLSINMADHELSCSTAAFLHVASSLTDPMTCLLTAISAASGPLHGGALEVCYQGLELIGSVDNVPAYIAAVKAKKFRLFGYGHRVYKIQDPRAALTKELMEEHREAIDANPLLQIAVEIDRQANTDPYFVERKLKLNADFYGCFIYIALGIPRDMIPGLLTISRMGGLMAHWREAMNNPIKIWRPMQKFKL</sequence>
<gene>
    <name evidence="8" type="primary">R3</name>
</gene>